<dbReference type="EC" id="2.1.1.170" evidence="1"/>
<dbReference type="EMBL" id="AE017125">
    <property type="protein sequence ID" value="AAP78083.1"/>
    <property type="molecule type" value="Genomic_DNA"/>
</dbReference>
<dbReference type="SMR" id="Q7VG38"/>
<dbReference type="STRING" id="235279.HH_1486"/>
<dbReference type="KEGG" id="hhe:HH_1486"/>
<dbReference type="eggNOG" id="COG0357">
    <property type="taxonomic scope" value="Bacteria"/>
</dbReference>
<dbReference type="HOGENOM" id="CLU_065341_2_1_7"/>
<dbReference type="Proteomes" id="UP000002495">
    <property type="component" value="Chromosome"/>
</dbReference>
<dbReference type="GO" id="GO:0005829">
    <property type="term" value="C:cytosol"/>
    <property type="evidence" value="ECO:0007669"/>
    <property type="project" value="TreeGrafter"/>
</dbReference>
<dbReference type="GO" id="GO:0070043">
    <property type="term" value="F:rRNA (guanine-N7-)-methyltransferase activity"/>
    <property type="evidence" value="ECO:0007669"/>
    <property type="project" value="UniProtKB-UniRule"/>
</dbReference>
<dbReference type="CDD" id="cd02440">
    <property type="entry name" value="AdoMet_MTases"/>
    <property type="match status" value="1"/>
</dbReference>
<dbReference type="Gene3D" id="3.40.50.150">
    <property type="entry name" value="Vaccinia Virus protein VP39"/>
    <property type="match status" value="1"/>
</dbReference>
<dbReference type="HAMAP" id="MF_00074">
    <property type="entry name" value="16SrRNA_methyltr_G"/>
    <property type="match status" value="1"/>
</dbReference>
<dbReference type="InterPro" id="IPR003682">
    <property type="entry name" value="rRNA_ssu_MeTfrase_G"/>
</dbReference>
<dbReference type="InterPro" id="IPR029063">
    <property type="entry name" value="SAM-dependent_MTases_sf"/>
</dbReference>
<dbReference type="NCBIfam" id="TIGR00138">
    <property type="entry name" value="rsmG_gidB"/>
    <property type="match status" value="1"/>
</dbReference>
<dbReference type="PANTHER" id="PTHR31760">
    <property type="entry name" value="S-ADENOSYL-L-METHIONINE-DEPENDENT METHYLTRANSFERASES SUPERFAMILY PROTEIN"/>
    <property type="match status" value="1"/>
</dbReference>
<dbReference type="PANTHER" id="PTHR31760:SF0">
    <property type="entry name" value="S-ADENOSYL-L-METHIONINE-DEPENDENT METHYLTRANSFERASES SUPERFAMILY PROTEIN"/>
    <property type="match status" value="1"/>
</dbReference>
<dbReference type="Pfam" id="PF02527">
    <property type="entry name" value="GidB"/>
    <property type="match status" value="1"/>
</dbReference>
<dbReference type="PIRSF" id="PIRSF003078">
    <property type="entry name" value="GidB"/>
    <property type="match status" value="1"/>
</dbReference>
<dbReference type="SUPFAM" id="SSF53335">
    <property type="entry name" value="S-adenosyl-L-methionine-dependent methyltransferases"/>
    <property type="match status" value="1"/>
</dbReference>
<accession>Q7VG38</accession>
<protein>
    <recommendedName>
        <fullName evidence="1">Ribosomal RNA small subunit methyltransferase G</fullName>
        <ecNumber evidence="1">2.1.1.170</ecNumber>
    </recommendedName>
    <alternativeName>
        <fullName evidence="1">16S rRNA 7-methylguanosine methyltransferase</fullName>
        <shortName evidence="1">16S rRNA m7G methyltransferase</shortName>
    </alternativeName>
</protein>
<keyword id="KW-0963">Cytoplasm</keyword>
<keyword id="KW-0489">Methyltransferase</keyword>
<keyword id="KW-1185">Reference proteome</keyword>
<keyword id="KW-0698">rRNA processing</keyword>
<keyword id="KW-0949">S-adenosyl-L-methionine</keyword>
<keyword id="KW-0808">Transferase</keyword>
<comment type="function">
    <text evidence="1">Specifically methylates the N7 position of guanine in position 527 of 16S rRNA.</text>
</comment>
<comment type="catalytic activity">
    <reaction evidence="1">
        <text>guanosine(527) in 16S rRNA + S-adenosyl-L-methionine = N(7)-methylguanosine(527) in 16S rRNA + S-adenosyl-L-homocysteine</text>
        <dbReference type="Rhea" id="RHEA:42732"/>
        <dbReference type="Rhea" id="RHEA-COMP:10209"/>
        <dbReference type="Rhea" id="RHEA-COMP:10210"/>
        <dbReference type="ChEBI" id="CHEBI:57856"/>
        <dbReference type="ChEBI" id="CHEBI:59789"/>
        <dbReference type="ChEBI" id="CHEBI:74269"/>
        <dbReference type="ChEBI" id="CHEBI:74480"/>
        <dbReference type="EC" id="2.1.1.170"/>
    </reaction>
</comment>
<comment type="subcellular location">
    <subcellularLocation>
        <location evidence="1">Cytoplasm</location>
    </subcellularLocation>
</comment>
<comment type="similarity">
    <text evidence="1">Belongs to the methyltransferase superfamily. RNA methyltransferase RsmG family.</text>
</comment>
<organism>
    <name type="scientific">Helicobacter hepaticus (strain ATCC 51449 / 3B1)</name>
    <dbReference type="NCBI Taxonomy" id="235279"/>
    <lineage>
        <taxon>Bacteria</taxon>
        <taxon>Pseudomonadati</taxon>
        <taxon>Campylobacterota</taxon>
        <taxon>Epsilonproteobacteria</taxon>
        <taxon>Campylobacterales</taxon>
        <taxon>Helicobacteraceae</taxon>
        <taxon>Helicobacter</taxon>
    </lineage>
</organism>
<feature type="chain" id="PRO_0000184262" description="Ribosomal RNA small subunit methyltransferase G">
    <location>
        <begin position="1"/>
        <end position="185"/>
    </location>
</feature>
<feature type="binding site" evidence="1">
    <location>
        <position position="59"/>
    </location>
    <ligand>
        <name>S-adenosyl-L-methionine</name>
        <dbReference type="ChEBI" id="CHEBI:59789"/>
    </ligand>
</feature>
<feature type="binding site" evidence="1">
    <location>
        <position position="64"/>
    </location>
    <ligand>
        <name>S-adenosyl-L-methionine</name>
        <dbReference type="ChEBI" id="CHEBI:59789"/>
    </ligand>
</feature>
<feature type="binding site" evidence="1">
    <location>
        <begin position="110"/>
        <end position="111"/>
    </location>
    <ligand>
        <name>S-adenosyl-L-methionine</name>
        <dbReference type="ChEBI" id="CHEBI:59789"/>
    </ligand>
</feature>
<feature type="binding site" evidence="1">
    <location>
        <position position="127"/>
    </location>
    <ligand>
        <name>S-adenosyl-L-methionine</name>
        <dbReference type="ChEBI" id="CHEBI:59789"/>
    </ligand>
</feature>
<proteinExistence type="inferred from homology"/>
<sequence>MLPEVCYKHFTIFGDELLKWNKIHNLTGASSIESVMENIFDSLYPLRFIDDFTSCMDIGSGGGFPAIPLAIAKPQSHFILIEPRNKRSCFLQNIIIQLELNNVQVRPIRIQDVPIAEVNNLDLITSRALMDAKELISLSRKFLKSEGYFLLYKGTRFRQETPSMSIEECFTRENRIYYYKHSRDL</sequence>
<reference key="1">
    <citation type="journal article" date="2003" name="Proc. Natl. Acad. Sci. U.S.A.">
        <title>The complete genome sequence of the carcinogenic bacterium Helicobacter hepaticus.</title>
        <authorList>
            <person name="Suerbaum S."/>
            <person name="Josenhans C."/>
            <person name="Sterzenbach T."/>
            <person name="Drescher B."/>
            <person name="Brandt P."/>
            <person name="Bell M."/>
            <person name="Droege M."/>
            <person name="Fartmann B."/>
            <person name="Fischer H.-P."/>
            <person name="Ge Z."/>
            <person name="Hoerster A."/>
            <person name="Holland R."/>
            <person name="Klein K."/>
            <person name="Koenig J."/>
            <person name="Macko L."/>
            <person name="Mendz G.L."/>
            <person name="Nyakatura G."/>
            <person name="Schauer D.B."/>
            <person name="Shen Z."/>
            <person name="Weber J."/>
            <person name="Frosch M."/>
            <person name="Fox J.G."/>
        </authorList>
    </citation>
    <scope>NUCLEOTIDE SEQUENCE [LARGE SCALE GENOMIC DNA]</scope>
    <source>
        <strain>ATCC 51449 / 3B1</strain>
    </source>
</reference>
<name>RSMG_HELHP</name>
<evidence type="ECO:0000255" key="1">
    <source>
        <dbReference type="HAMAP-Rule" id="MF_00074"/>
    </source>
</evidence>
<gene>
    <name evidence="1" type="primary">rsmG</name>
    <name type="ordered locus">HH_1486</name>
</gene>